<organism>
    <name type="scientific">Lens culinaris subsp. culinaris</name>
    <name type="common">Cultivated lentil</name>
    <name type="synonym">Lens esculenta</name>
    <dbReference type="NCBI Taxonomy" id="362247"/>
    <lineage>
        <taxon>Eukaryota</taxon>
        <taxon>Viridiplantae</taxon>
        <taxon>Streptophyta</taxon>
        <taxon>Embryophyta</taxon>
        <taxon>Tracheophyta</taxon>
        <taxon>Spermatophyta</taxon>
        <taxon>Magnoliopsida</taxon>
        <taxon>eudicotyledons</taxon>
        <taxon>Gunneridae</taxon>
        <taxon>Pentapetalae</taxon>
        <taxon>rosids</taxon>
        <taxon>fabids</taxon>
        <taxon>Fabales</taxon>
        <taxon>Fabaceae</taxon>
        <taxon>Papilionoideae</taxon>
        <taxon>50 kb inversion clade</taxon>
        <taxon>NPAAA clade</taxon>
        <taxon>Hologalegina</taxon>
        <taxon>IRL clade</taxon>
        <taxon>Fabeae</taxon>
        <taxon>Lens</taxon>
    </lineage>
</organism>
<proteinExistence type="evidence at protein level"/>
<comment type="function">
    <text evidence="3">Has antifungal activity against the phytopathogenic fungus A.niger VKM F-2259, but not against A.alternata VKM F-3047. Does not inhibit trypsin or chymotrypsin.</text>
</comment>
<comment type="subcellular location">
    <subcellularLocation>
        <location evidence="1">Secreted</location>
    </subcellularLocation>
</comment>
<comment type="mass spectrometry" mass="5440.41" method="MALDI" evidence="3"/>
<comment type="similarity">
    <text evidence="5">Belongs to the DEFL family.</text>
</comment>
<sequence length="74" mass="8401">MEKKTVAALSFLFIVLFVAQEIAVTEAKTCENLSDSFKGPCIPDGNCNKHCKEKEHLLSGRCRDDFRCWCTRNC</sequence>
<protein>
    <recommendedName>
        <fullName evidence="4 6">Defensin Lc-def</fullName>
    </recommendedName>
</protein>
<name>DEF_LENCC</name>
<dbReference type="EMBL" id="EF194158">
    <property type="protein sequence ID" value="ABP04037.1"/>
    <property type="molecule type" value="mRNA"/>
</dbReference>
<dbReference type="PDB" id="2LJ7">
    <property type="method" value="NMR"/>
    <property type="chains" value="A=28-74"/>
</dbReference>
<dbReference type="PDBsum" id="2LJ7"/>
<dbReference type="BMRB" id="B3F051"/>
<dbReference type="SMR" id="B3F051"/>
<dbReference type="TCDB" id="1.C.45.1.4">
    <property type="family name" value="the plant defensin (plant defensin) family"/>
</dbReference>
<dbReference type="EvolutionaryTrace" id="B3F051"/>
<dbReference type="GO" id="GO:0005576">
    <property type="term" value="C:extracellular region"/>
    <property type="evidence" value="ECO:0007669"/>
    <property type="project" value="UniProtKB-SubCell"/>
</dbReference>
<dbReference type="GO" id="GO:0050832">
    <property type="term" value="P:defense response to fungus"/>
    <property type="evidence" value="ECO:0007669"/>
    <property type="project" value="UniProtKB-KW"/>
</dbReference>
<dbReference type="GO" id="GO:0031640">
    <property type="term" value="P:killing of cells of another organism"/>
    <property type="evidence" value="ECO:0007669"/>
    <property type="project" value="UniProtKB-KW"/>
</dbReference>
<dbReference type="CDD" id="cd00107">
    <property type="entry name" value="Knot1"/>
    <property type="match status" value="1"/>
</dbReference>
<dbReference type="Gene3D" id="3.30.30.10">
    <property type="entry name" value="Knottin, scorpion toxin-like"/>
    <property type="match status" value="1"/>
</dbReference>
<dbReference type="InterPro" id="IPR008176">
    <property type="entry name" value="Defensin_plant"/>
</dbReference>
<dbReference type="InterPro" id="IPR003614">
    <property type="entry name" value="Scorpion_toxin-like"/>
</dbReference>
<dbReference type="InterPro" id="IPR036574">
    <property type="entry name" value="Scorpion_toxin-like_sf"/>
</dbReference>
<dbReference type="PANTHER" id="PTHR33147:SF56">
    <property type="entry name" value="DEFENSIN"/>
    <property type="match status" value="1"/>
</dbReference>
<dbReference type="PANTHER" id="PTHR33147">
    <property type="entry name" value="DEFENSIN-LIKE PROTEIN 1"/>
    <property type="match status" value="1"/>
</dbReference>
<dbReference type="Pfam" id="PF00304">
    <property type="entry name" value="Gamma-thionin"/>
    <property type="match status" value="1"/>
</dbReference>
<dbReference type="SMART" id="SM00505">
    <property type="entry name" value="Knot1"/>
    <property type="match status" value="1"/>
</dbReference>
<dbReference type="SUPFAM" id="SSF57095">
    <property type="entry name" value="Scorpion toxin-like"/>
    <property type="match status" value="1"/>
</dbReference>
<dbReference type="PROSITE" id="PS00940">
    <property type="entry name" value="GAMMA_THIONIN"/>
    <property type="match status" value="1"/>
</dbReference>
<accession>B3F051</accession>
<accession>P85530</accession>
<evidence type="ECO:0000250" key="1"/>
<evidence type="ECO:0000250" key="2">
    <source>
        <dbReference type="UniProtKB" id="P81929"/>
    </source>
</evidence>
<evidence type="ECO:0000269" key="3">
    <source>
    </source>
</evidence>
<evidence type="ECO:0000303" key="4">
    <source>
    </source>
</evidence>
<evidence type="ECO:0000305" key="5"/>
<evidence type="ECO:0000312" key="6">
    <source>
        <dbReference type="EMBL" id="ABP04037.1"/>
    </source>
</evidence>
<evidence type="ECO:0007829" key="7">
    <source>
        <dbReference type="PDB" id="2LJ7"/>
    </source>
</evidence>
<reference evidence="5 6" key="1">
    <citation type="journal article" date="2008" name="Biochem. Biophys. Res. Commun.">
        <title>A novel defensin from the lentil Lens culinaris seeds.</title>
        <authorList>
            <person name="Finkina E.I."/>
            <person name="Shramova E.I."/>
            <person name="Tagaev A.A."/>
            <person name="Ovchinnikova T.V."/>
        </authorList>
    </citation>
    <scope>NUCLEOTIDE SEQUENCE [MRNA]</scope>
    <scope>PROTEIN SEQUENCE OF 28-74</scope>
    <scope>FUNCTION</scope>
    <scope>MASS SPECTROMETRY</scope>
    <source>
        <tissue evidence="3">Seedling</tissue>
    </source>
</reference>
<feature type="signal peptide" evidence="3">
    <location>
        <begin position="1"/>
        <end position="27"/>
    </location>
</feature>
<feature type="chain" id="PRO_5000375684" description="Defensin Lc-def" evidence="3">
    <location>
        <begin position="28"/>
        <end position="74"/>
    </location>
</feature>
<feature type="disulfide bond" evidence="2">
    <location>
        <begin position="30"/>
        <end position="74"/>
    </location>
</feature>
<feature type="disulfide bond" evidence="2">
    <location>
        <begin position="41"/>
        <end position="62"/>
    </location>
</feature>
<feature type="disulfide bond" evidence="2">
    <location>
        <begin position="47"/>
        <end position="68"/>
    </location>
</feature>
<feature type="disulfide bond" evidence="2">
    <location>
        <begin position="51"/>
        <end position="70"/>
    </location>
</feature>
<feature type="strand" evidence="7">
    <location>
        <begin position="29"/>
        <end position="33"/>
    </location>
</feature>
<feature type="helix" evidence="7">
    <location>
        <begin position="47"/>
        <end position="53"/>
    </location>
</feature>
<feature type="strand" evidence="7">
    <location>
        <begin position="58"/>
        <end position="62"/>
    </location>
</feature>
<feature type="strand" evidence="7">
    <location>
        <begin position="68"/>
        <end position="73"/>
    </location>
</feature>
<keyword id="KW-0002">3D-structure</keyword>
<keyword id="KW-0929">Antimicrobial</keyword>
<keyword id="KW-0903">Direct protein sequencing</keyword>
<keyword id="KW-1015">Disulfide bond</keyword>
<keyword id="KW-0295">Fungicide</keyword>
<keyword id="KW-0611">Plant defense</keyword>
<keyword id="KW-0964">Secreted</keyword>
<keyword id="KW-0732">Signal</keyword>